<organism>
    <name type="scientific">Escherichia coli O127:H6 (strain E2348/69 / EPEC)</name>
    <dbReference type="NCBI Taxonomy" id="574521"/>
    <lineage>
        <taxon>Bacteria</taxon>
        <taxon>Pseudomonadati</taxon>
        <taxon>Pseudomonadota</taxon>
        <taxon>Gammaproteobacteria</taxon>
        <taxon>Enterobacterales</taxon>
        <taxon>Enterobacteriaceae</taxon>
        <taxon>Escherichia</taxon>
    </lineage>
</organism>
<proteinExistence type="inferred from homology"/>
<name>GARL_ECO27</name>
<protein>
    <recommendedName>
        <fullName evidence="1">5-keto-4-deoxy-D-glucarate aldolase</fullName>
        <shortName evidence="1">KDGluc aldolase</shortName>
        <shortName evidence="1">KDGlucA</shortName>
        <ecNumber evidence="1">4.1.2.20</ecNumber>
    </recommendedName>
    <alternativeName>
        <fullName evidence="1">2-dehydro-3-deoxy-D-glucarate aldolase</fullName>
    </alternativeName>
    <alternativeName>
        <fullName evidence="1">2-keto-3-deoxy-D-glucarate aldolase</fullName>
    </alternativeName>
    <alternativeName>
        <fullName evidence="1">5-dehydro-4-deoxy-D-glucarate aldolase</fullName>
    </alternativeName>
    <alternativeName>
        <fullName evidence="1">Alpha-keto-beta-deoxy-D-glucarate aldolase</fullName>
    </alternativeName>
</protein>
<gene>
    <name evidence="1" type="primary">garL</name>
    <name type="ordered locus">E2348C_3412</name>
</gene>
<reference key="1">
    <citation type="journal article" date="2009" name="J. Bacteriol.">
        <title>Complete genome sequence and comparative genome analysis of enteropathogenic Escherichia coli O127:H6 strain E2348/69.</title>
        <authorList>
            <person name="Iguchi A."/>
            <person name="Thomson N.R."/>
            <person name="Ogura Y."/>
            <person name="Saunders D."/>
            <person name="Ooka T."/>
            <person name="Henderson I.R."/>
            <person name="Harris D."/>
            <person name="Asadulghani M."/>
            <person name="Kurokawa K."/>
            <person name="Dean P."/>
            <person name="Kenny B."/>
            <person name="Quail M.A."/>
            <person name="Thurston S."/>
            <person name="Dougan G."/>
            <person name="Hayashi T."/>
            <person name="Parkhill J."/>
            <person name="Frankel G."/>
        </authorList>
    </citation>
    <scope>NUCLEOTIDE SEQUENCE [LARGE SCALE GENOMIC DNA]</scope>
    <source>
        <strain>E2348/69 / EPEC</strain>
    </source>
</reference>
<evidence type="ECO:0000255" key="1">
    <source>
        <dbReference type="HAMAP-Rule" id="MF_01291"/>
    </source>
</evidence>
<sequence length="256" mass="27399">MNNDVFPNKFKAALAAKQVQIGCWSALSNPISTEVLGLAGFDWLVLDGEHAPNDISTFIPQLMALKGSASAPVVRVPTNEPVIIKRLLDIGFYNFLIPFVETKEEAEQAVASTRYPPEGIRGVSVSHRANMFGTVADYFAQSNKNITILVQIESQQGVDNVDAIAATEGVDGIFVGPSDLAAALGHLGNASHPDVQKAIQHIFNRASAHGKPSGILAPVEADARRYLEWGATFVAVGSDLGVFRSATQKLADTFKK</sequence>
<keyword id="KW-0456">Lyase</keyword>
<keyword id="KW-0460">Magnesium</keyword>
<keyword id="KW-0479">Metal-binding</keyword>
<keyword id="KW-1185">Reference proteome</keyword>
<feature type="chain" id="PRO_1000165271" description="5-keto-4-deoxy-D-glucarate aldolase">
    <location>
        <begin position="1"/>
        <end position="256"/>
    </location>
</feature>
<feature type="active site" description="Proton acceptor" evidence="1">
    <location>
        <position position="50"/>
    </location>
</feature>
<feature type="binding site" evidence="1">
    <location>
        <position position="151"/>
    </location>
    <ligand>
        <name>substrate</name>
    </ligand>
</feature>
<feature type="binding site" evidence="1">
    <location>
        <position position="153"/>
    </location>
    <ligand>
        <name>Mg(2+)</name>
        <dbReference type="ChEBI" id="CHEBI:18420"/>
    </ligand>
</feature>
<feature type="binding site" evidence="1">
    <location>
        <position position="178"/>
    </location>
    <ligand>
        <name>substrate</name>
    </ligand>
</feature>
<feature type="binding site" evidence="1">
    <location>
        <position position="179"/>
    </location>
    <ligand>
        <name>Mg(2+)</name>
        <dbReference type="ChEBI" id="CHEBI:18420"/>
    </ligand>
</feature>
<feature type="binding site" evidence="1">
    <location>
        <position position="179"/>
    </location>
    <ligand>
        <name>substrate</name>
    </ligand>
</feature>
<feature type="site" description="Transition state stabilizer" evidence="1">
    <location>
        <position position="75"/>
    </location>
</feature>
<feature type="site" description="Increases basicity of active site His" evidence="1">
    <location>
        <position position="89"/>
    </location>
</feature>
<accession>B7UJ26</accession>
<dbReference type="EC" id="4.1.2.20" evidence="1"/>
<dbReference type="EMBL" id="FM180568">
    <property type="protein sequence ID" value="CAS10960.1"/>
    <property type="molecule type" value="Genomic_DNA"/>
</dbReference>
<dbReference type="RefSeq" id="WP_001058227.1">
    <property type="nucleotide sequence ID" value="NC_011601.1"/>
</dbReference>
<dbReference type="SMR" id="B7UJ26"/>
<dbReference type="GeneID" id="93778860"/>
<dbReference type="KEGG" id="ecg:E2348C_3412"/>
<dbReference type="HOGENOM" id="CLU_059964_1_0_6"/>
<dbReference type="UniPathway" id="UPA00565">
    <property type="reaction ID" value="UER00630"/>
</dbReference>
<dbReference type="Proteomes" id="UP000008205">
    <property type="component" value="Chromosome"/>
</dbReference>
<dbReference type="GO" id="GO:0005737">
    <property type="term" value="C:cytoplasm"/>
    <property type="evidence" value="ECO:0007669"/>
    <property type="project" value="TreeGrafter"/>
</dbReference>
<dbReference type="GO" id="GO:0008672">
    <property type="term" value="F:2-dehydro-3-deoxyglucarate aldolase activity"/>
    <property type="evidence" value="ECO:0007669"/>
    <property type="project" value="UniProtKB-UniRule"/>
</dbReference>
<dbReference type="GO" id="GO:0000287">
    <property type="term" value="F:magnesium ion binding"/>
    <property type="evidence" value="ECO:0007669"/>
    <property type="project" value="UniProtKB-UniRule"/>
</dbReference>
<dbReference type="GO" id="GO:0042838">
    <property type="term" value="P:D-glucarate catabolic process"/>
    <property type="evidence" value="ECO:0007669"/>
    <property type="project" value="UniProtKB-UniRule"/>
</dbReference>
<dbReference type="GO" id="GO:0046392">
    <property type="term" value="P:galactarate catabolic process"/>
    <property type="evidence" value="ECO:0007669"/>
    <property type="project" value="UniProtKB-UniRule"/>
</dbReference>
<dbReference type="FunFam" id="3.20.20.60:FF:000004">
    <property type="entry name" value="5-keto-4-deoxy-D-glucarate aldolase"/>
    <property type="match status" value="1"/>
</dbReference>
<dbReference type="Gene3D" id="3.20.20.60">
    <property type="entry name" value="Phosphoenolpyruvate-binding domains"/>
    <property type="match status" value="1"/>
</dbReference>
<dbReference type="HAMAP" id="MF_01291">
    <property type="entry name" value="KDGluc_aldolase"/>
    <property type="match status" value="1"/>
</dbReference>
<dbReference type="InterPro" id="IPR005000">
    <property type="entry name" value="Aldolase/citrate-lyase_domain"/>
</dbReference>
<dbReference type="InterPro" id="IPR017648">
    <property type="entry name" value="GarL"/>
</dbReference>
<dbReference type="InterPro" id="IPR050251">
    <property type="entry name" value="HpcH-HpaI_aldolase"/>
</dbReference>
<dbReference type="InterPro" id="IPR015813">
    <property type="entry name" value="Pyrv/PenolPyrv_kinase-like_dom"/>
</dbReference>
<dbReference type="InterPro" id="IPR040442">
    <property type="entry name" value="Pyrv_kinase-like_dom_sf"/>
</dbReference>
<dbReference type="NCBIfam" id="TIGR03239">
    <property type="entry name" value="GarL"/>
    <property type="match status" value="1"/>
</dbReference>
<dbReference type="NCBIfam" id="NF007849">
    <property type="entry name" value="PRK10558.1"/>
    <property type="match status" value="1"/>
</dbReference>
<dbReference type="PANTHER" id="PTHR30502">
    <property type="entry name" value="2-KETO-3-DEOXY-L-RHAMNONATE ALDOLASE"/>
    <property type="match status" value="1"/>
</dbReference>
<dbReference type="PANTHER" id="PTHR30502:SF4">
    <property type="entry name" value="5-KETO-4-DEOXY-D-GLUCARATE ALDOLASE"/>
    <property type="match status" value="1"/>
</dbReference>
<dbReference type="Pfam" id="PF03328">
    <property type="entry name" value="HpcH_HpaI"/>
    <property type="match status" value="1"/>
</dbReference>
<dbReference type="SUPFAM" id="SSF51621">
    <property type="entry name" value="Phosphoenolpyruvate/pyruvate domain"/>
    <property type="match status" value="1"/>
</dbReference>
<comment type="function">
    <text evidence="1">Catalyzes the reversible retro-aldol cleavage of both 5-keto-4-deoxy-D-glucarate and 2-keto-3-deoxy-D-glucarate to pyruvate and tartronic semialdehyde.</text>
</comment>
<comment type="catalytic activity">
    <reaction evidence="1">
        <text>5-dehydro-4-deoxy-D-glucarate = 2-hydroxy-3-oxopropanoate + pyruvate</text>
        <dbReference type="Rhea" id="RHEA:27726"/>
        <dbReference type="ChEBI" id="CHEBI:15361"/>
        <dbReference type="ChEBI" id="CHEBI:42819"/>
        <dbReference type="ChEBI" id="CHEBI:57978"/>
    </reaction>
</comment>
<comment type="catalytic activity">
    <reaction evidence="1">
        <text>2-dehydro-3-deoxy-D-glucarate = 2-hydroxy-3-oxopropanoate + pyruvate</text>
        <dbReference type="Rhea" id="RHEA:10268"/>
        <dbReference type="ChEBI" id="CHEBI:15361"/>
        <dbReference type="ChEBI" id="CHEBI:57978"/>
        <dbReference type="ChEBI" id="CHEBI:58098"/>
        <dbReference type="EC" id="4.1.2.20"/>
    </reaction>
</comment>
<comment type="cofactor">
    <cofactor evidence="1">
        <name>Mg(2+)</name>
        <dbReference type="ChEBI" id="CHEBI:18420"/>
    </cofactor>
    <text evidence="1">Binds 1 Mg(2+) ion per subunit.</text>
</comment>
<comment type="pathway">
    <text evidence="1">Carbohydrate acid metabolism; galactarate degradation; D-glycerate from galactarate: step 2/3.</text>
</comment>
<comment type="subunit">
    <text evidence="1">Homohexamer; trimer of dimers.</text>
</comment>
<comment type="similarity">
    <text evidence="1">Belongs to the HpcH/HpaI aldolase family. KDGluc aldolase subfamily.</text>
</comment>